<proteinExistence type="inferred from homology"/>
<protein>
    <recommendedName>
        <fullName evidence="1">Large ribosomal subunit protein bL27</fullName>
    </recommendedName>
    <alternativeName>
        <fullName evidence="3">50S ribosomal protein L27</fullName>
    </alternativeName>
</protein>
<accession>B5Y806</accession>
<sequence>MAHHKGGGSSRNGKDSNPQYLGVKAYGGEKVKPGSIIVRQRGNHFWPGKNVGQGKDFTLFALAEGVVQFEKKGGKKFVSVIPNEQK</sequence>
<feature type="chain" id="PRO_1000128725" description="Large ribosomal subunit protein bL27">
    <location>
        <begin position="1"/>
        <end position="86"/>
    </location>
</feature>
<feature type="region of interest" description="Disordered" evidence="2">
    <location>
        <begin position="1"/>
        <end position="21"/>
    </location>
</feature>
<evidence type="ECO:0000255" key="1">
    <source>
        <dbReference type="HAMAP-Rule" id="MF_00539"/>
    </source>
</evidence>
<evidence type="ECO:0000256" key="2">
    <source>
        <dbReference type="SAM" id="MobiDB-lite"/>
    </source>
</evidence>
<evidence type="ECO:0000305" key="3"/>
<organism>
    <name type="scientific">Coprothermobacter proteolyticus (strain ATCC 35245 / DSM 5265 / OCM 4 / BT)</name>
    <dbReference type="NCBI Taxonomy" id="309798"/>
    <lineage>
        <taxon>Bacteria</taxon>
        <taxon>Pseudomonadati</taxon>
        <taxon>Coprothermobacterota</taxon>
        <taxon>Coprothermobacteria</taxon>
        <taxon>Coprothermobacterales</taxon>
        <taxon>Coprothermobacteraceae</taxon>
        <taxon>Coprothermobacter</taxon>
    </lineage>
</organism>
<comment type="similarity">
    <text evidence="1">Belongs to the bacterial ribosomal protein bL27 family.</text>
</comment>
<name>RL27_COPPD</name>
<reference key="1">
    <citation type="submission" date="2008-08" db="EMBL/GenBank/DDBJ databases">
        <title>The complete genome sequence of Coprothermobacter proteolyticus strain ATCC 5245 / DSM 5265 / BT.</title>
        <authorList>
            <person name="Dodson R.J."/>
            <person name="Durkin A.S."/>
            <person name="Wu M."/>
            <person name="Eisen J."/>
            <person name="Sutton G."/>
        </authorList>
    </citation>
    <scope>NUCLEOTIDE SEQUENCE [LARGE SCALE GENOMIC DNA]</scope>
    <source>
        <strain>ATCC 35245 / DSM 5265 / OCM 4 / BT</strain>
    </source>
</reference>
<dbReference type="EMBL" id="CP001145">
    <property type="protein sequence ID" value="ACI17224.1"/>
    <property type="molecule type" value="Genomic_DNA"/>
</dbReference>
<dbReference type="RefSeq" id="WP_012543876.1">
    <property type="nucleotide sequence ID" value="NC_011295.1"/>
</dbReference>
<dbReference type="SMR" id="B5Y806"/>
<dbReference type="STRING" id="309798.COPRO5265_0547"/>
<dbReference type="KEGG" id="cpo:COPRO5265_0547"/>
<dbReference type="eggNOG" id="COG0211">
    <property type="taxonomic scope" value="Bacteria"/>
</dbReference>
<dbReference type="HOGENOM" id="CLU_095424_4_1_9"/>
<dbReference type="OrthoDB" id="9803474at2"/>
<dbReference type="Proteomes" id="UP000001732">
    <property type="component" value="Chromosome"/>
</dbReference>
<dbReference type="GO" id="GO:0022625">
    <property type="term" value="C:cytosolic large ribosomal subunit"/>
    <property type="evidence" value="ECO:0007669"/>
    <property type="project" value="TreeGrafter"/>
</dbReference>
<dbReference type="GO" id="GO:0003735">
    <property type="term" value="F:structural constituent of ribosome"/>
    <property type="evidence" value="ECO:0007669"/>
    <property type="project" value="InterPro"/>
</dbReference>
<dbReference type="GO" id="GO:0006412">
    <property type="term" value="P:translation"/>
    <property type="evidence" value="ECO:0007669"/>
    <property type="project" value="UniProtKB-UniRule"/>
</dbReference>
<dbReference type="FunFam" id="2.40.50.100:FF:000020">
    <property type="entry name" value="50S ribosomal protein L27"/>
    <property type="match status" value="1"/>
</dbReference>
<dbReference type="Gene3D" id="2.40.50.100">
    <property type="match status" value="1"/>
</dbReference>
<dbReference type="HAMAP" id="MF_00539">
    <property type="entry name" value="Ribosomal_bL27"/>
    <property type="match status" value="1"/>
</dbReference>
<dbReference type="InterPro" id="IPR001684">
    <property type="entry name" value="Ribosomal_bL27"/>
</dbReference>
<dbReference type="InterPro" id="IPR018261">
    <property type="entry name" value="Ribosomal_bL27_CS"/>
</dbReference>
<dbReference type="NCBIfam" id="TIGR00062">
    <property type="entry name" value="L27"/>
    <property type="match status" value="1"/>
</dbReference>
<dbReference type="PANTHER" id="PTHR15893:SF0">
    <property type="entry name" value="LARGE RIBOSOMAL SUBUNIT PROTEIN BL27M"/>
    <property type="match status" value="1"/>
</dbReference>
<dbReference type="PANTHER" id="PTHR15893">
    <property type="entry name" value="RIBOSOMAL PROTEIN L27"/>
    <property type="match status" value="1"/>
</dbReference>
<dbReference type="Pfam" id="PF01016">
    <property type="entry name" value="Ribosomal_L27"/>
    <property type="match status" value="1"/>
</dbReference>
<dbReference type="PRINTS" id="PR00063">
    <property type="entry name" value="RIBOSOMALL27"/>
</dbReference>
<dbReference type="SUPFAM" id="SSF110324">
    <property type="entry name" value="Ribosomal L27 protein-like"/>
    <property type="match status" value="1"/>
</dbReference>
<dbReference type="PROSITE" id="PS00831">
    <property type="entry name" value="RIBOSOMAL_L27"/>
    <property type="match status" value="1"/>
</dbReference>
<gene>
    <name evidence="1" type="primary">rpmA</name>
    <name type="ordered locus">COPRO5265_0547</name>
</gene>
<keyword id="KW-1185">Reference proteome</keyword>
<keyword id="KW-0687">Ribonucleoprotein</keyword>
<keyword id="KW-0689">Ribosomal protein</keyword>